<name>VATB_FUSNN</name>
<accession>Q8RI79</accession>
<keyword id="KW-0066">ATP synthesis</keyword>
<keyword id="KW-0375">Hydrogen ion transport</keyword>
<keyword id="KW-0406">Ion transport</keyword>
<keyword id="KW-1185">Reference proteome</keyword>
<keyword id="KW-0813">Transport</keyword>
<reference key="1">
    <citation type="journal article" date="2002" name="J. Bacteriol.">
        <title>Genome sequence and analysis of the oral bacterium Fusobacterium nucleatum strain ATCC 25586.</title>
        <authorList>
            <person name="Kapatral V."/>
            <person name="Anderson I."/>
            <person name="Ivanova N."/>
            <person name="Reznik G."/>
            <person name="Los T."/>
            <person name="Lykidis A."/>
            <person name="Bhattacharyya A."/>
            <person name="Bartman A."/>
            <person name="Gardner W."/>
            <person name="Grechkin G."/>
            <person name="Zhu L."/>
            <person name="Vasieva O."/>
            <person name="Chu L."/>
            <person name="Kogan Y."/>
            <person name="Chaga O."/>
            <person name="Goltsman E."/>
            <person name="Bernal A."/>
            <person name="Larsen N."/>
            <person name="D'Souza M."/>
            <person name="Walunas T."/>
            <person name="Pusch G."/>
            <person name="Haselkorn R."/>
            <person name="Fonstein M."/>
            <person name="Kyrpides N.C."/>
            <person name="Overbeek R."/>
        </authorList>
    </citation>
    <scope>NUCLEOTIDE SEQUENCE [LARGE SCALE GENOMIC DNA]</scope>
    <source>
        <strain>ATCC 25586 / DSM 15643 / BCRC 10681 / CIP 101130 / JCM 8532 / KCTC 2640 / LMG 13131 / VPI 4355</strain>
    </source>
</reference>
<proteinExistence type="inferred from homology"/>
<protein>
    <recommendedName>
        <fullName evidence="1">V-type ATP synthase beta chain</fullName>
    </recommendedName>
    <alternativeName>
        <fullName evidence="1">V-ATPase subunit B</fullName>
    </alternativeName>
</protein>
<gene>
    <name evidence="1" type="primary">atpB</name>
    <name type="ordered locus">FN1734</name>
</gene>
<sequence length="458" mass="50759">MLKEYKSVQEVVGPLMIVEGVEGIKYEELVEIQTQTGEKRRGRVLEIDGDRAMIQLFEGSAGINLKDTTVRFLGKPLELGVSEDMIGRIFDGLGNPIDKGPKIIPEKRVDINGSPINPVSRDYPSEFIQTGISTIDGLNTLVRGQKLPIFSGSGLPHNNVAAQIARQAKVLGDDAKFAVVFAAMGITFEEAQFFIDDFTKTGAIDRAVLFINLANDPAIERISTPRMALTCAEYLAFEKGMHVLVILTDLTNYAEALREVSAARKEVPGRRGYPGYLYTDLSQIYERAGKIKGKPGSITQIPILTMPEDDITHPIPDLTGYITEGQIILSRELYKSGIQPPIFVIPSLSRLKDKGIGRGKTREDHADTMNQIYAGYASGREARELAVILGDTALSDADKAFAKFAENFDKEYVNQGYETNRSILETLDLGWKLLKVIPHAELKRIRTEYIDKYLADKD</sequence>
<feature type="chain" id="PRO_0000322498" description="V-type ATP synthase beta chain">
    <location>
        <begin position="1"/>
        <end position="458"/>
    </location>
</feature>
<comment type="function">
    <text evidence="1">Produces ATP from ADP in the presence of a proton gradient across the membrane. The V-type beta chain is a regulatory subunit.</text>
</comment>
<comment type="similarity">
    <text evidence="1">Belongs to the ATPase alpha/beta chains family.</text>
</comment>
<organism>
    <name type="scientific">Fusobacterium nucleatum subsp. nucleatum (strain ATCC 25586 / DSM 15643 / BCRC 10681 / CIP 101130 / JCM 8532 / KCTC 2640 / LMG 13131 / VPI 4355)</name>
    <dbReference type="NCBI Taxonomy" id="190304"/>
    <lineage>
        <taxon>Bacteria</taxon>
        <taxon>Fusobacteriati</taxon>
        <taxon>Fusobacteriota</taxon>
        <taxon>Fusobacteriia</taxon>
        <taxon>Fusobacteriales</taxon>
        <taxon>Fusobacteriaceae</taxon>
        <taxon>Fusobacterium</taxon>
    </lineage>
</organism>
<evidence type="ECO:0000255" key="1">
    <source>
        <dbReference type="HAMAP-Rule" id="MF_00310"/>
    </source>
</evidence>
<dbReference type="EMBL" id="AE009951">
    <property type="protein sequence ID" value="AAL93849.1"/>
    <property type="molecule type" value="Genomic_DNA"/>
</dbReference>
<dbReference type="RefSeq" id="NP_602550.1">
    <property type="nucleotide sequence ID" value="NC_003454.1"/>
</dbReference>
<dbReference type="RefSeq" id="WP_011015800.1">
    <property type="nucleotide sequence ID" value="NZ_CP028101.1"/>
</dbReference>
<dbReference type="SMR" id="Q8RI79"/>
<dbReference type="STRING" id="190304.FN1734"/>
<dbReference type="PaxDb" id="190304-FN1734"/>
<dbReference type="EnsemblBacteria" id="AAL93849">
    <property type="protein sequence ID" value="AAL93849"/>
    <property type="gene ID" value="FN1734"/>
</dbReference>
<dbReference type="GeneID" id="79782666"/>
<dbReference type="KEGG" id="fnu:FN1734"/>
<dbReference type="PATRIC" id="fig|190304.8.peg.223"/>
<dbReference type="eggNOG" id="COG1156">
    <property type="taxonomic scope" value="Bacteria"/>
</dbReference>
<dbReference type="HOGENOM" id="CLU_022916_0_0_0"/>
<dbReference type="InParanoid" id="Q8RI79"/>
<dbReference type="BioCyc" id="FNUC190304:G1FZS-234-MONOMER"/>
<dbReference type="Proteomes" id="UP000002521">
    <property type="component" value="Chromosome"/>
</dbReference>
<dbReference type="GO" id="GO:0045259">
    <property type="term" value="C:proton-transporting ATP synthase complex"/>
    <property type="evidence" value="ECO:0007669"/>
    <property type="project" value="UniProtKB-ARBA"/>
</dbReference>
<dbReference type="GO" id="GO:0005524">
    <property type="term" value="F:ATP binding"/>
    <property type="evidence" value="ECO:0007669"/>
    <property type="project" value="UniProtKB-UniRule"/>
</dbReference>
<dbReference type="GO" id="GO:0046933">
    <property type="term" value="F:proton-transporting ATP synthase activity, rotational mechanism"/>
    <property type="evidence" value="ECO:0007669"/>
    <property type="project" value="UniProtKB-UniRule"/>
</dbReference>
<dbReference type="GO" id="GO:0042777">
    <property type="term" value="P:proton motive force-driven plasma membrane ATP synthesis"/>
    <property type="evidence" value="ECO:0007669"/>
    <property type="project" value="UniProtKB-UniRule"/>
</dbReference>
<dbReference type="CDD" id="cd18112">
    <property type="entry name" value="ATP-synt_V_A-type_beta_C"/>
    <property type="match status" value="1"/>
</dbReference>
<dbReference type="CDD" id="cd18118">
    <property type="entry name" value="ATP-synt_V_A-type_beta_N"/>
    <property type="match status" value="1"/>
</dbReference>
<dbReference type="CDD" id="cd01135">
    <property type="entry name" value="V_A-ATPase_B"/>
    <property type="match status" value="1"/>
</dbReference>
<dbReference type="Gene3D" id="3.40.50.12240">
    <property type="match status" value="1"/>
</dbReference>
<dbReference type="HAMAP" id="MF_00310">
    <property type="entry name" value="ATP_synth_B_arch"/>
    <property type="match status" value="1"/>
</dbReference>
<dbReference type="InterPro" id="IPR055190">
    <property type="entry name" value="ATP-synt_VA_C"/>
</dbReference>
<dbReference type="InterPro" id="IPR004100">
    <property type="entry name" value="ATPase_F1/V1/A1_a/bsu_N"/>
</dbReference>
<dbReference type="InterPro" id="IPR036121">
    <property type="entry name" value="ATPase_F1/V1/A1_a/bsu_N_sf"/>
</dbReference>
<dbReference type="InterPro" id="IPR000194">
    <property type="entry name" value="ATPase_F1/V1/A1_a/bsu_nucl-bd"/>
</dbReference>
<dbReference type="InterPro" id="IPR027417">
    <property type="entry name" value="P-loop_NTPase"/>
</dbReference>
<dbReference type="InterPro" id="IPR022879">
    <property type="entry name" value="V-ATPase_su_B/beta"/>
</dbReference>
<dbReference type="NCBIfam" id="NF003235">
    <property type="entry name" value="PRK04196.1"/>
    <property type="match status" value="1"/>
</dbReference>
<dbReference type="PANTHER" id="PTHR43389">
    <property type="entry name" value="V-TYPE PROTON ATPASE SUBUNIT B"/>
    <property type="match status" value="1"/>
</dbReference>
<dbReference type="PANTHER" id="PTHR43389:SF4">
    <property type="entry name" value="V-TYPE PROTON ATPASE SUBUNIT B"/>
    <property type="match status" value="1"/>
</dbReference>
<dbReference type="Pfam" id="PF00006">
    <property type="entry name" value="ATP-synt_ab"/>
    <property type="match status" value="1"/>
</dbReference>
<dbReference type="Pfam" id="PF02874">
    <property type="entry name" value="ATP-synt_ab_N"/>
    <property type="match status" value="1"/>
</dbReference>
<dbReference type="Pfam" id="PF22919">
    <property type="entry name" value="ATP-synt_VA_C"/>
    <property type="match status" value="1"/>
</dbReference>
<dbReference type="PIRSF" id="PIRSF039114">
    <property type="entry name" value="V-ATPsynth_beta/V-ATPase_B"/>
    <property type="match status" value="1"/>
</dbReference>
<dbReference type="SUPFAM" id="SSF50615">
    <property type="entry name" value="N-terminal domain of alpha and beta subunits of F1 ATP synthase"/>
    <property type="match status" value="1"/>
</dbReference>
<dbReference type="SUPFAM" id="SSF52540">
    <property type="entry name" value="P-loop containing nucleoside triphosphate hydrolases"/>
    <property type="match status" value="1"/>
</dbReference>